<feature type="chain" id="PRO_0000228172" description="Translation initiation factor IF-2">
    <location>
        <begin position="1"/>
        <end position="975"/>
    </location>
</feature>
<feature type="domain" description="tr-type G">
    <location>
        <begin position="469"/>
        <end position="639"/>
    </location>
</feature>
<feature type="region of interest" description="Disordered" evidence="3">
    <location>
        <begin position="49"/>
        <end position="110"/>
    </location>
</feature>
<feature type="region of interest" description="Disordered" evidence="3">
    <location>
        <begin position="193"/>
        <end position="339"/>
    </location>
</feature>
<feature type="region of interest" description="G1" evidence="1">
    <location>
        <begin position="478"/>
        <end position="485"/>
    </location>
</feature>
<feature type="region of interest" description="G2" evidence="1">
    <location>
        <begin position="503"/>
        <end position="507"/>
    </location>
</feature>
<feature type="region of interest" description="G3" evidence="1">
    <location>
        <begin position="525"/>
        <end position="528"/>
    </location>
</feature>
<feature type="region of interest" description="G4" evidence="1">
    <location>
        <begin position="579"/>
        <end position="582"/>
    </location>
</feature>
<feature type="region of interest" description="G5" evidence="1">
    <location>
        <begin position="615"/>
        <end position="617"/>
    </location>
</feature>
<feature type="compositionally biased region" description="Basic residues" evidence="3">
    <location>
        <begin position="63"/>
        <end position="72"/>
    </location>
</feature>
<feature type="compositionally biased region" description="Low complexity" evidence="3">
    <location>
        <begin position="73"/>
        <end position="94"/>
    </location>
</feature>
<feature type="compositionally biased region" description="Low complexity" evidence="3">
    <location>
        <begin position="193"/>
        <end position="202"/>
    </location>
</feature>
<feature type="compositionally biased region" description="Low complexity" evidence="3">
    <location>
        <begin position="209"/>
        <end position="225"/>
    </location>
</feature>
<feature type="compositionally biased region" description="Basic and acidic residues" evidence="3">
    <location>
        <begin position="308"/>
        <end position="318"/>
    </location>
</feature>
<feature type="compositionally biased region" description="Low complexity" evidence="3">
    <location>
        <begin position="324"/>
        <end position="336"/>
    </location>
</feature>
<feature type="binding site" evidence="2">
    <location>
        <begin position="478"/>
        <end position="485"/>
    </location>
    <ligand>
        <name>GTP</name>
        <dbReference type="ChEBI" id="CHEBI:37565"/>
    </ligand>
</feature>
<feature type="binding site" evidence="2">
    <location>
        <begin position="525"/>
        <end position="529"/>
    </location>
    <ligand>
        <name>GTP</name>
        <dbReference type="ChEBI" id="CHEBI:37565"/>
    </ligand>
</feature>
<feature type="binding site" evidence="2">
    <location>
        <begin position="579"/>
        <end position="582"/>
    </location>
    <ligand>
        <name>GTP</name>
        <dbReference type="ChEBI" id="CHEBI:37565"/>
    </ligand>
</feature>
<organism>
    <name type="scientific">Bdellovibrio bacteriovorus (strain ATCC 15356 / DSM 50701 / NCIMB 9529 / HD100)</name>
    <dbReference type="NCBI Taxonomy" id="264462"/>
    <lineage>
        <taxon>Bacteria</taxon>
        <taxon>Pseudomonadati</taxon>
        <taxon>Bdellovibrionota</taxon>
        <taxon>Bdellovibrionia</taxon>
        <taxon>Bdellovibrionales</taxon>
        <taxon>Pseudobdellovibrionaceae</taxon>
        <taxon>Bdellovibrio</taxon>
    </lineage>
</organism>
<proteinExistence type="inferred from homology"/>
<sequence>MSNPKVFEFAKEIGMTPLALMDKIREWHLPVKSHMAELEPEVLEQIKIKLSGGEKSGDEAKPKKTAARKAAPKKAAVAAPVPEADASSAAAKTPVIRRKKDEVPAEAPKAKVVAKPEGEVEEAAAAPKTTRVVVKKPAVKAEAEEVEETPEVEAAAPVEEKAPVKAAVKEEAPAPVEKPEPVVAKEVPAAPVAAAPEAPAPQARKKEVVVGTSGVSSSATPASAPKRNIIGRMDLSRVQSQAPQRPQGERPAGGFTPRAGGEQRGASASFTGQRPGGFNRPAGGAPTRNIRTGFVAANQPPEPIVETGADRGGRDFDKRKRTFGPSAPAAGPAAAGRGAGEKEEVVVSFNAVEFRKREMVFQPKKKKGLLDRDAMKTQITTPSAHKRVVKVNNTMKLSDLAMEMGLKAPQLVRELMKQGVMANMNMDLDFDTIALIVPEFGWEAQNVFKTADEVAEQTAFGDLDAAPVTRPPVVTVMGHVDHGKTSLLDAIRNADVAKGEAGGITQHIGAYSVKIEDGSLITFLDTPGHEAFTAMRARGANATDIAIIVVAADDGMMPQTQEAINHAKAAGVPIIVAVNKIDKPGANPERIKQQLTELEIVPEEWGGSTIFCEVSALKKTGITELLEQIKLVAEVAELKANPKRSGTGLVIEAKMEKGKGPVATLLVKDGTVEVGQYIVAGTMKGRVRSLTNDRGERVQSAGPGIPVEVLGLEAVPAAGDKFDIVKDEVTATKVSELRKEQAEKAAATPAAKLSLDEVFAKVKAGDVKELAIVLKADVHGSLEAINGMLAKLSTPEVKARVIHSAVGGINEGDIVLANTAKGIVLGFNVRPDLGAQAKAKQMGVDVRTYSIVYELIDQMKAAMGGLLSPDIVEEVLGRAEVRNVFTVPKVGTIAGCFVIDGKVQRNASIRLLRENKIVYEGKIASLKRFKDDAKEVASGYECGIGIENYNDVKVGDQMEAFVKKEVARELEGGAN</sequence>
<reference key="1">
    <citation type="journal article" date="2004" name="Science">
        <title>A predator unmasked: life cycle of Bdellovibrio bacteriovorus from a genomic perspective.</title>
        <authorList>
            <person name="Rendulic S."/>
            <person name="Jagtap P."/>
            <person name="Rosinus A."/>
            <person name="Eppinger M."/>
            <person name="Baar C."/>
            <person name="Lanz C."/>
            <person name="Keller H."/>
            <person name="Lambert C."/>
            <person name="Evans K.J."/>
            <person name="Goesmann A."/>
            <person name="Meyer F."/>
            <person name="Sockett R.E."/>
            <person name="Schuster S.C."/>
        </authorList>
    </citation>
    <scope>NUCLEOTIDE SEQUENCE [LARGE SCALE GENOMIC DNA]</scope>
    <source>
        <strain>ATCC 15356 / DSM 50701 / NCIMB 9529 / HD100</strain>
    </source>
</reference>
<keyword id="KW-0963">Cytoplasm</keyword>
<keyword id="KW-0342">GTP-binding</keyword>
<keyword id="KW-0396">Initiation factor</keyword>
<keyword id="KW-0547">Nucleotide-binding</keyword>
<keyword id="KW-0648">Protein biosynthesis</keyword>
<keyword id="KW-1185">Reference proteome</keyword>
<evidence type="ECO:0000250" key="1"/>
<evidence type="ECO:0000255" key="2">
    <source>
        <dbReference type="HAMAP-Rule" id="MF_00100"/>
    </source>
</evidence>
<evidence type="ECO:0000256" key="3">
    <source>
        <dbReference type="SAM" id="MobiDB-lite"/>
    </source>
</evidence>
<name>IF2_BDEBA</name>
<comment type="function">
    <text evidence="2">One of the essential components for the initiation of protein synthesis. Protects formylmethionyl-tRNA from spontaneous hydrolysis and promotes its binding to the 30S ribosomal subunits. Also involved in the hydrolysis of GTP during the formation of the 70S ribosomal complex.</text>
</comment>
<comment type="subcellular location">
    <subcellularLocation>
        <location evidence="2">Cytoplasm</location>
    </subcellularLocation>
</comment>
<comment type="similarity">
    <text evidence="2">Belongs to the TRAFAC class translation factor GTPase superfamily. Classic translation factor GTPase family. IF-2 subfamily.</text>
</comment>
<gene>
    <name evidence="2" type="primary">infB</name>
    <name type="ordered locus">Bd1547</name>
</gene>
<protein>
    <recommendedName>
        <fullName evidence="2">Translation initiation factor IF-2</fullName>
    </recommendedName>
</protein>
<dbReference type="EMBL" id="BX842650">
    <property type="protein sequence ID" value="CAE79427.1"/>
    <property type="molecule type" value="Genomic_DNA"/>
</dbReference>
<dbReference type="RefSeq" id="WP_011164029.1">
    <property type="nucleotide sequence ID" value="NC_005363.1"/>
</dbReference>
<dbReference type="SMR" id="Q6MMS6"/>
<dbReference type="STRING" id="264462.Bd1547"/>
<dbReference type="GeneID" id="93012544"/>
<dbReference type="KEGG" id="bba:Bd1547"/>
<dbReference type="eggNOG" id="COG0532">
    <property type="taxonomic scope" value="Bacteria"/>
</dbReference>
<dbReference type="HOGENOM" id="CLU_006301_5_1_7"/>
<dbReference type="Proteomes" id="UP000008080">
    <property type="component" value="Chromosome"/>
</dbReference>
<dbReference type="GO" id="GO:0005829">
    <property type="term" value="C:cytosol"/>
    <property type="evidence" value="ECO:0007669"/>
    <property type="project" value="TreeGrafter"/>
</dbReference>
<dbReference type="GO" id="GO:0005525">
    <property type="term" value="F:GTP binding"/>
    <property type="evidence" value="ECO:0007669"/>
    <property type="project" value="UniProtKB-KW"/>
</dbReference>
<dbReference type="GO" id="GO:0003924">
    <property type="term" value="F:GTPase activity"/>
    <property type="evidence" value="ECO:0007669"/>
    <property type="project" value="UniProtKB-UniRule"/>
</dbReference>
<dbReference type="GO" id="GO:0003743">
    <property type="term" value="F:translation initiation factor activity"/>
    <property type="evidence" value="ECO:0007669"/>
    <property type="project" value="UniProtKB-UniRule"/>
</dbReference>
<dbReference type="CDD" id="cd01887">
    <property type="entry name" value="IF2_eIF5B"/>
    <property type="match status" value="1"/>
</dbReference>
<dbReference type="CDD" id="cd03702">
    <property type="entry name" value="IF2_mtIF2_II"/>
    <property type="match status" value="1"/>
</dbReference>
<dbReference type="CDD" id="cd03692">
    <property type="entry name" value="mtIF2_IVc"/>
    <property type="match status" value="1"/>
</dbReference>
<dbReference type="FunFam" id="2.40.30.10:FF:000008">
    <property type="entry name" value="Translation initiation factor IF-2"/>
    <property type="match status" value="1"/>
</dbReference>
<dbReference type="FunFam" id="2.40.30.10:FF:000054">
    <property type="entry name" value="Translation initiation factor IF-2"/>
    <property type="match status" value="1"/>
</dbReference>
<dbReference type="FunFam" id="3.40.50.10050:FF:000001">
    <property type="entry name" value="Translation initiation factor IF-2"/>
    <property type="match status" value="1"/>
</dbReference>
<dbReference type="FunFam" id="3.40.50.300:FF:000019">
    <property type="entry name" value="Translation initiation factor IF-2"/>
    <property type="match status" value="1"/>
</dbReference>
<dbReference type="Gene3D" id="1.10.10.2480">
    <property type="match status" value="1"/>
</dbReference>
<dbReference type="Gene3D" id="3.40.50.300">
    <property type="entry name" value="P-loop containing nucleotide triphosphate hydrolases"/>
    <property type="match status" value="1"/>
</dbReference>
<dbReference type="Gene3D" id="2.40.30.10">
    <property type="entry name" value="Translation factors"/>
    <property type="match status" value="2"/>
</dbReference>
<dbReference type="Gene3D" id="3.40.50.10050">
    <property type="entry name" value="Translation initiation factor IF- 2, domain 3"/>
    <property type="match status" value="1"/>
</dbReference>
<dbReference type="HAMAP" id="MF_00100_B">
    <property type="entry name" value="IF_2_B"/>
    <property type="match status" value="1"/>
</dbReference>
<dbReference type="InterPro" id="IPR053905">
    <property type="entry name" value="EF-G-like_DII"/>
</dbReference>
<dbReference type="InterPro" id="IPR004161">
    <property type="entry name" value="EFTu-like_2"/>
</dbReference>
<dbReference type="InterPro" id="IPR044145">
    <property type="entry name" value="IF2_II"/>
</dbReference>
<dbReference type="InterPro" id="IPR006847">
    <property type="entry name" value="IF2_N"/>
</dbReference>
<dbReference type="InterPro" id="IPR027417">
    <property type="entry name" value="P-loop_NTPase"/>
</dbReference>
<dbReference type="InterPro" id="IPR005225">
    <property type="entry name" value="Small_GTP-bd"/>
</dbReference>
<dbReference type="InterPro" id="IPR000795">
    <property type="entry name" value="T_Tr_GTP-bd_dom"/>
</dbReference>
<dbReference type="InterPro" id="IPR000178">
    <property type="entry name" value="TF_IF2_bacterial-like"/>
</dbReference>
<dbReference type="InterPro" id="IPR015760">
    <property type="entry name" value="TIF_IF2"/>
</dbReference>
<dbReference type="InterPro" id="IPR023115">
    <property type="entry name" value="TIF_IF2_dom3"/>
</dbReference>
<dbReference type="InterPro" id="IPR036925">
    <property type="entry name" value="TIF_IF2_dom3_sf"/>
</dbReference>
<dbReference type="InterPro" id="IPR009000">
    <property type="entry name" value="Transl_B-barrel_sf"/>
</dbReference>
<dbReference type="NCBIfam" id="TIGR00487">
    <property type="entry name" value="IF-2"/>
    <property type="match status" value="1"/>
</dbReference>
<dbReference type="NCBIfam" id="TIGR00231">
    <property type="entry name" value="small_GTP"/>
    <property type="match status" value="1"/>
</dbReference>
<dbReference type="PANTHER" id="PTHR43381:SF5">
    <property type="entry name" value="TR-TYPE G DOMAIN-CONTAINING PROTEIN"/>
    <property type="match status" value="1"/>
</dbReference>
<dbReference type="PANTHER" id="PTHR43381">
    <property type="entry name" value="TRANSLATION INITIATION FACTOR IF-2-RELATED"/>
    <property type="match status" value="1"/>
</dbReference>
<dbReference type="Pfam" id="PF22042">
    <property type="entry name" value="EF-G_D2"/>
    <property type="match status" value="1"/>
</dbReference>
<dbReference type="Pfam" id="PF00009">
    <property type="entry name" value="GTP_EFTU"/>
    <property type="match status" value="1"/>
</dbReference>
<dbReference type="Pfam" id="PF03144">
    <property type="entry name" value="GTP_EFTU_D2"/>
    <property type="match status" value="1"/>
</dbReference>
<dbReference type="Pfam" id="PF11987">
    <property type="entry name" value="IF-2"/>
    <property type="match status" value="1"/>
</dbReference>
<dbReference type="Pfam" id="PF04760">
    <property type="entry name" value="IF2_N"/>
    <property type="match status" value="1"/>
</dbReference>
<dbReference type="SUPFAM" id="SSF52156">
    <property type="entry name" value="Initiation factor IF2/eIF5b, domain 3"/>
    <property type="match status" value="1"/>
</dbReference>
<dbReference type="SUPFAM" id="SSF52540">
    <property type="entry name" value="P-loop containing nucleoside triphosphate hydrolases"/>
    <property type="match status" value="1"/>
</dbReference>
<dbReference type="SUPFAM" id="SSF50447">
    <property type="entry name" value="Translation proteins"/>
    <property type="match status" value="2"/>
</dbReference>
<dbReference type="PROSITE" id="PS51722">
    <property type="entry name" value="G_TR_2"/>
    <property type="match status" value="1"/>
</dbReference>
<dbReference type="PROSITE" id="PS01176">
    <property type="entry name" value="IF2"/>
    <property type="match status" value="1"/>
</dbReference>
<accession>Q6MMS6</accession>